<proteinExistence type="evidence at protein level"/>
<evidence type="ECO:0000250" key="1">
    <source>
        <dbReference type="UniProtKB" id="P0C606"/>
    </source>
</evidence>
<evidence type="ECO:0000250" key="2">
    <source>
        <dbReference type="UniProtKB" id="Q9DA08"/>
    </source>
</evidence>
<evidence type="ECO:0000255" key="3"/>
<evidence type="ECO:0000255" key="4">
    <source>
        <dbReference type="PROSITE-ProRule" id="PRU00851"/>
    </source>
</evidence>
<evidence type="ECO:0000269" key="5">
    <source>
    </source>
</evidence>
<evidence type="ECO:0000269" key="6">
    <source>
    </source>
</evidence>
<evidence type="ECO:0000269" key="7">
    <source>
    </source>
</evidence>
<evidence type="ECO:0000269" key="8">
    <source>
    </source>
</evidence>
<evidence type="ECO:0000269" key="9">
    <source>
    </source>
</evidence>
<evidence type="ECO:0000269" key="10">
    <source>
    </source>
</evidence>
<evidence type="ECO:0000305" key="11"/>
<evidence type="ECO:0000312" key="12">
    <source>
        <dbReference type="HGNC" id="HGNC:25156"/>
    </source>
</evidence>
<evidence type="ECO:0007744" key="13">
    <source>
        <dbReference type="PDB" id="5C0M"/>
    </source>
</evidence>
<evidence type="ECO:0007744" key="14">
    <source>
    </source>
</evidence>
<evidence type="ECO:0007829" key="15">
    <source>
        <dbReference type="PDB" id="3MEA"/>
    </source>
</evidence>
<evidence type="ECO:0007829" key="16">
    <source>
        <dbReference type="PDB" id="3MEU"/>
    </source>
</evidence>
<reference key="1">
    <citation type="journal article" date="2004" name="Nat. Genet.">
        <title>Complete sequencing and characterization of 21,243 full-length human cDNAs.</title>
        <authorList>
            <person name="Ota T."/>
            <person name="Suzuki Y."/>
            <person name="Nishikawa T."/>
            <person name="Otsuki T."/>
            <person name="Sugiyama T."/>
            <person name="Irie R."/>
            <person name="Wakamatsu A."/>
            <person name="Hayashi K."/>
            <person name="Sato H."/>
            <person name="Nagai K."/>
            <person name="Kimura K."/>
            <person name="Makita H."/>
            <person name="Sekine M."/>
            <person name="Obayashi M."/>
            <person name="Nishi T."/>
            <person name="Shibahara T."/>
            <person name="Tanaka T."/>
            <person name="Ishii S."/>
            <person name="Yamamoto J."/>
            <person name="Saito K."/>
            <person name="Kawai Y."/>
            <person name="Isono Y."/>
            <person name="Nakamura Y."/>
            <person name="Nagahari K."/>
            <person name="Murakami K."/>
            <person name="Yasuda T."/>
            <person name="Iwayanagi T."/>
            <person name="Wagatsuma M."/>
            <person name="Shiratori A."/>
            <person name="Sudo H."/>
            <person name="Hosoiri T."/>
            <person name="Kaku Y."/>
            <person name="Kodaira H."/>
            <person name="Kondo H."/>
            <person name="Sugawara M."/>
            <person name="Takahashi M."/>
            <person name="Kanda K."/>
            <person name="Yokoi T."/>
            <person name="Furuya T."/>
            <person name="Kikkawa E."/>
            <person name="Omura Y."/>
            <person name="Abe K."/>
            <person name="Kamihara K."/>
            <person name="Katsuta N."/>
            <person name="Sato K."/>
            <person name="Tanikawa M."/>
            <person name="Yamazaki M."/>
            <person name="Ninomiya K."/>
            <person name="Ishibashi T."/>
            <person name="Yamashita H."/>
            <person name="Murakawa K."/>
            <person name="Fujimori K."/>
            <person name="Tanai H."/>
            <person name="Kimata M."/>
            <person name="Watanabe M."/>
            <person name="Hiraoka S."/>
            <person name="Chiba Y."/>
            <person name="Ishida S."/>
            <person name="Ono Y."/>
            <person name="Takiguchi S."/>
            <person name="Watanabe S."/>
            <person name="Yosida M."/>
            <person name="Hotuta T."/>
            <person name="Kusano J."/>
            <person name="Kanehori K."/>
            <person name="Takahashi-Fujii A."/>
            <person name="Hara H."/>
            <person name="Tanase T.-O."/>
            <person name="Nomura Y."/>
            <person name="Togiya S."/>
            <person name="Komai F."/>
            <person name="Hara R."/>
            <person name="Takeuchi K."/>
            <person name="Arita M."/>
            <person name="Imose N."/>
            <person name="Musashino K."/>
            <person name="Yuuki H."/>
            <person name="Oshima A."/>
            <person name="Sasaki N."/>
            <person name="Aotsuka S."/>
            <person name="Yoshikawa Y."/>
            <person name="Matsunawa H."/>
            <person name="Ichihara T."/>
            <person name="Shiohata N."/>
            <person name="Sano S."/>
            <person name="Moriya S."/>
            <person name="Momiyama H."/>
            <person name="Satoh N."/>
            <person name="Takami S."/>
            <person name="Terashima Y."/>
            <person name="Suzuki O."/>
            <person name="Nakagawa S."/>
            <person name="Senoh A."/>
            <person name="Mizoguchi H."/>
            <person name="Goto Y."/>
            <person name="Shimizu F."/>
            <person name="Wakebe H."/>
            <person name="Hishigaki H."/>
            <person name="Watanabe T."/>
            <person name="Sugiyama A."/>
            <person name="Takemoto M."/>
            <person name="Kawakami B."/>
            <person name="Yamazaki M."/>
            <person name="Watanabe K."/>
            <person name="Kumagai A."/>
            <person name="Itakura S."/>
            <person name="Fukuzumi Y."/>
            <person name="Fujimori Y."/>
            <person name="Komiyama M."/>
            <person name="Tashiro H."/>
            <person name="Tanigami A."/>
            <person name="Fujiwara T."/>
            <person name="Ono T."/>
            <person name="Yamada K."/>
            <person name="Fujii Y."/>
            <person name="Ozaki K."/>
            <person name="Hirao M."/>
            <person name="Ohmori Y."/>
            <person name="Kawabata A."/>
            <person name="Hikiji T."/>
            <person name="Kobatake N."/>
            <person name="Inagaki H."/>
            <person name="Ikema Y."/>
            <person name="Okamoto S."/>
            <person name="Okitani R."/>
            <person name="Kawakami T."/>
            <person name="Noguchi S."/>
            <person name="Itoh T."/>
            <person name="Shigeta K."/>
            <person name="Senba T."/>
            <person name="Matsumura K."/>
            <person name="Nakajima Y."/>
            <person name="Mizuno T."/>
            <person name="Morinaga M."/>
            <person name="Sasaki M."/>
            <person name="Togashi T."/>
            <person name="Oyama M."/>
            <person name="Hata H."/>
            <person name="Watanabe M."/>
            <person name="Komatsu T."/>
            <person name="Mizushima-Sugano J."/>
            <person name="Satoh T."/>
            <person name="Shirai Y."/>
            <person name="Takahashi Y."/>
            <person name="Nakagawa K."/>
            <person name="Okumura K."/>
            <person name="Nagase T."/>
            <person name="Nomura N."/>
            <person name="Kikuchi H."/>
            <person name="Masuho Y."/>
            <person name="Yamashita R."/>
            <person name="Nakai K."/>
            <person name="Yada T."/>
            <person name="Nakamura Y."/>
            <person name="Ohara O."/>
            <person name="Isogai T."/>
            <person name="Sugano S."/>
        </authorList>
    </citation>
    <scope>NUCLEOTIDE SEQUENCE [LARGE SCALE MRNA]</scope>
    <source>
        <tissue>Skeletal muscle</tissue>
    </source>
</reference>
<reference key="2">
    <citation type="journal article" date="2004" name="Genome Res.">
        <title>The status, quality, and expansion of the NIH full-length cDNA project: the Mammalian Gene Collection (MGC).</title>
        <authorList>
            <consortium name="The MGC Project Team"/>
        </authorList>
    </citation>
    <scope>NUCLEOTIDE SEQUENCE [LARGE SCALE MRNA]</scope>
    <source>
        <tissue>Ovary</tissue>
    </source>
</reference>
<reference key="3">
    <citation type="journal article" date="2009" name="Mol. Cell. Biol.">
        <title>The double-histone-acetyltransferase complex ATAC is essential for mammalian development.</title>
        <authorList>
            <person name="Guelman S."/>
            <person name="Kozuka K."/>
            <person name="Mao Y."/>
            <person name="Pham V."/>
            <person name="Solloway M.J."/>
            <person name="Wang J."/>
            <person name="Wu J."/>
            <person name="Lill J.R."/>
            <person name="Zha J."/>
        </authorList>
    </citation>
    <scope>FUNCTION</scope>
    <scope>IDENTIFICATION IN ATAC COMPLEX</scope>
</reference>
<reference key="4">
    <citation type="journal article" date="2009" name="Science">
        <title>Lysine acetylation targets protein complexes and co-regulates major cellular functions.</title>
        <authorList>
            <person name="Choudhary C."/>
            <person name="Kumar C."/>
            <person name="Gnad F."/>
            <person name="Nielsen M.L."/>
            <person name="Rehman M."/>
            <person name="Walther T.C."/>
            <person name="Olsen J.V."/>
            <person name="Mann M."/>
        </authorList>
    </citation>
    <scope>ACETYLATION [LARGE SCALE ANALYSIS] AT LYS-288</scope>
    <scope>IDENTIFICATION BY MASS SPECTROMETRY [LARGE SCALE ANALYSIS]</scope>
</reference>
<reference key="5">
    <citation type="journal article" date="2010" name="Cell">
        <title>Quantitative interaction proteomics and genome-wide profiling of epigenetic histone marks and their readers.</title>
        <authorList>
            <person name="Vermeulen M."/>
            <person name="Eberl H.C."/>
            <person name="Matarese F."/>
            <person name="Marks H."/>
            <person name="Denissov S."/>
            <person name="Butter F."/>
            <person name="Lee K.K."/>
            <person name="Olsen J.V."/>
            <person name="Hyman A.A."/>
            <person name="Stunnenberg H.G."/>
            <person name="Mann M."/>
        </authorList>
    </citation>
    <scope>FUNCTION</scope>
    <scope>METHYLATED HISTONE-BINDING</scope>
    <scope>IDENTIFICATION IN A SAGA-TYPE COMPLEX</scope>
    <scope>MUTAGENESIS OF TRP-175; GLU-179; PRO-214; GLN-232; TYR-238; TYR-245; PRO-256; PHE-264 AND ARG-282</scope>
</reference>
<reference key="6">
    <citation type="journal article" date="2011" name="BMC Syst. Biol.">
        <title>Initial characterization of the human central proteome.</title>
        <authorList>
            <person name="Burkard T.R."/>
            <person name="Planyavsky M."/>
            <person name="Kaupe I."/>
            <person name="Breitwieser F.P."/>
            <person name="Buerckstuemmer T."/>
            <person name="Bennett K.L."/>
            <person name="Superti-Furga G."/>
            <person name="Colinge J."/>
        </authorList>
    </citation>
    <scope>IDENTIFICATION BY MASS SPECTROMETRY [LARGE SCALE ANALYSIS]</scope>
</reference>
<reference key="7">
    <citation type="journal article" date="2013" name="PLoS ONE">
        <title>A dual role for SAGA-associated factor 29 (SGF29) in ER stress survival by coordination of both histone H3 acetylation and histone H3 lysine-4 trimethylation.</title>
        <authorList>
            <person name="Schram A.W."/>
            <person name="Baas R."/>
            <person name="Jansen P.W."/>
            <person name="Riss A."/>
            <person name="Tora L."/>
            <person name="Vermeulen M."/>
            <person name="Timmers H.T."/>
        </authorList>
    </citation>
    <scope>FUNCTION</scope>
</reference>
<reference key="8">
    <citation type="journal article" date="2015" name="PLoS ONE">
        <title>The role of electrostatic interactions in binding of histone H3K4me2/3 to the Sgf29 tandem Tudor domain.</title>
        <authorList>
            <person name="Pieters B.J."/>
            <person name="Meulenbroeks E."/>
            <person name="Belle R."/>
            <person name="Mecinovic J."/>
        </authorList>
    </citation>
    <scope>DOMAIN</scope>
    <scope>FUNCTION</scope>
    <scope>MUTAGENESIS OF TYR-238; TYR-245 AND ASP-266</scope>
</reference>
<reference key="9">
    <citation type="journal article" date="2011" name="EMBO J.">
        <title>Sgf29 binds histone H3K4me2/3 and is required for SAGA complex recruitment and histone H3 acetylation.</title>
        <authorList>
            <person name="Bian C."/>
            <person name="Xu C."/>
            <person name="Ruan J."/>
            <person name="Lee K.K."/>
            <person name="Burke T.L."/>
            <person name="Tempel W."/>
            <person name="Barsyte D."/>
            <person name="Li J."/>
            <person name="Wu M."/>
            <person name="Zhou B.O."/>
            <person name="Fleharty B.E."/>
            <person name="Paulson A."/>
            <person name="Allali-Hassani A."/>
            <person name="Zhou J.Q."/>
            <person name="Mer G."/>
            <person name="Grant P.A."/>
            <person name="Workman J.L."/>
            <person name="Zang J."/>
            <person name="Min J."/>
        </authorList>
    </citation>
    <scope>X-RAY CRYSTALLOGRAPHY (1.26 ANGSTROMS) OF 115-293 IN COMPLEX WITH H3K4ME2 PEPTIDE</scope>
    <scope>FUNCTION</scope>
    <scope>INTERACTION WITH H3K4ME2 AND H3K4ME3</scope>
    <scope>MUTAGENESIS OF ASP-194; ASP-196; TYR-238; GLN-240; THR-242; TYR-245; PHE-264 AND ASP-266</scope>
    <scope>DOMAIN</scope>
</reference>
<reference evidence="13" key="10">
    <citation type="journal article" date="2015" name="Nat. Commun.">
        <title>Chemical basis for the recognition of trimethyllysine by epigenetic reader proteins.</title>
        <authorList>
            <person name="Kamps J.J."/>
            <person name="Huang J."/>
            <person name="Poater J."/>
            <person name="Xu C."/>
            <person name="Pieters B.J."/>
            <person name="Dong A."/>
            <person name="Min J."/>
            <person name="Sherman W."/>
            <person name="Beuming T."/>
            <person name="Matthias Bickelhaupt F."/>
            <person name="Li H."/>
            <person name="Mecinovic J."/>
        </authorList>
    </citation>
    <scope>X-RAY CRYSTALLOGRAPHY (1.60 ANGSTROMS) OF 115-293 IN COMPLEX WITH H3K4ME3 PEPTIDE</scope>
    <scope>DOMAIN</scope>
    <scope>FUNCTION</scope>
</reference>
<feature type="chain" id="PRO_0000274268" description="SAGA-associated factor 29">
    <location>
        <begin position="1"/>
        <end position="293"/>
    </location>
</feature>
<feature type="domain" description="SGF29 C-terminal" evidence="4">
    <location>
        <begin position="152"/>
        <end position="293"/>
    </location>
</feature>
<feature type="region of interest" description="Histone H3K4me3 N-terminus binding" evidence="7 10">
    <location>
        <begin position="194"/>
        <end position="196"/>
    </location>
</feature>
<feature type="region of interest" description="Histone H3K4me3 N-terminus binding" evidence="7 10">
    <location>
        <begin position="240"/>
        <end position="243"/>
    </location>
</feature>
<feature type="region of interest" description="Histone H3K4me3 binding" evidence="7">
    <location>
        <begin position="264"/>
        <end position="266"/>
    </location>
</feature>
<feature type="coiled-coil region" evidence="3">
    <location>
        <begin position="3"/>
        <end position="88"/>
    </location>
</feature>
<feature type="site" description="Histone H3K4me3 binding" evidence="7">
    <location>
        <position position="238"/>
    </location>
</feature>
<feature type="site" description="Histone H3K4me3 binding" evidence="7 10">
    <location>
        <position position="245"/>
    </location>
</feature>
<feature type="modified residue" description="N6-acetyllysine" evidence="14">
    <location>
        <position position="288"/>
    </location>
</feature>
<feature type="mutagenesis site" description="Does not strongly affect binding to H3K4me." evidence="6">
    <original>W</original>
    <variation>A</variation>
    <location>
        <position position="175"/>
    </location>
</feature>
<feature type="mutagenesis site" description="Does not strongly affect binding to H3K4me." evidence="6">
    <original>E</original>
    <variation>A</variation>
    <location>
        <position position="179"/>
    </location>
</feature>
<feature type="mutagenesis site" description="Abolishes H3K4me3 binding." evidence="7">
    <original>D</original>
    <variation>A</variation>
    <variation>R</variation>
    <location>
        <position position="194"/>
    </location>
</feature>
<feature type="mutagenesis site" description="Abolishes H3K4me3 binding." evidence="7">
    <original>D</original>
    <variation>R</variation>
    <location>
        <position position="196"/>
    </location>
</feature>
<feature type="mutagenesis site" description="Does not strongly affect binding to H3K4me." evidence="6">
    <original>P</original>
    <variation>A</variation>
    <location>
        <position position="214"/>
    </location>
</feature>
<feature type="mutagenesis site" description="Does not strongly affect binding to H3K4me." evidence="6">
    <original>Q</original>
    <variation>A</variation>
    <location>
        <position position="232"/>
    </location>
</feature>
<feature type="mutagenesis site" description="Strongly reduced H3K4me3 binding." evidence="6 7">
    <original>Y</original>
    <variation>A</variation>
    <location>
        <position position="238"/>
    </location>
</feature>
<feature type="mutagenesis site" description="Does not affect binding to H3K4me3." evidence="9">
    <original>Y</original>
    <variation>F</variation>
    <location>
        <position position="238"/>
    </location>
</feature>
<feature type="mutagenesis site" description="Slightly reduced H3K4me3 binding." evidence="7">
    <original>Q</original>
    <variation>A</variation>
    <location>
        <position position="240"/>
    </location>
</feature>
<feature type="mutagenesis site" description="Almost abolished H3K4me3 binding." evidence="7">
    <original>T</original>
    <variation>A</variation>
    <location>
        <position position="242"/>
    </location>
</feature>
<feature type="mutagenesis site" description="Abolishes H3K4me3 binding." evidence="6 7">
    <original>Y</original>
    <variation>A</variation>
    <location>
        <position position="245"/>
    </location>
</feature>
<feature type="mutagenesis site" description="Reduced H3K4me3 binding." evidence="9">
    <original>Y</original>
    <variation>F</variation>
    <location>
        <position position="245"/>
    </location>
</feature>
<feature type="mutagenesis site" description="Does not strongly affect binding to H3K4me." evidence="6">
    <original>P</original>
    <variation>A</variation>
    <location>
        <position position="256"/>
    </location>
</feature>
<feature type="mutagenesis site" description="Strongly reduced binding to H3K4me3." evidence="6 7">
    <original>F</original>
    <variation>A</variation>
    <location>
        <position position="264"/>
    </location>
</feature>
<feature type="mutagenesis site" description="Strongly reduced binding to H3K4me3." evidence="7 9">
    <original>D</original>
    <variation>A</variation>
    <variation>F</variation>
    <variation>Y</variation>
    <variation>W</variation>
    <location>
        <position position="266"/>
    </location>
</feature>
<feature type="mutagenesis site" description="Does not affect binding to H3K4me3." evidence="9">
    <original>D</original>
    <variation>E</variation>
    <location>
        <position position="266"/>
    </location>
</feature>
<feature type="mutagenesis site" description="Slightly reduced binding to H3K4me3." evidence="9">
    <original>D</original>
    <variation>N</variation>
    <location>
        <position position="266"/>
    </location>
</feature>
<feature type="mutagenesis site" description="Does not strongly affect binding to H3K4me." evidence="6">
    <original>R</original>
    <variation>A</variation>
    <location>
        <position position="282"/>
    </location>
</feature>
<feature type="sequence conflict" description="In Ref. 1; BAB71340." evidence="11" ref="1">
    <original>I</original>
    <variation>N</variation>
    <location>
        <position position="249"/>
    </location>
</feature>
<feature type="helix" evidence="16">
    <location>
        <begin position="115"/>
        <end position="129"/>
    </location>
</feature>
<feature type="strand" evidence="15">
    <location>
        <begin position="161"/>
        <end position="167"/>
    </location>
</feature>
<feature type="strand" evidence="15">
    <location>
        <begin position="173"/>
        <end position="184"/>
    </location>
</feature>
<feature type="turn" evidence="15">
    <location>
        <begin position="185"/>
        <end position="188"/>
    </location>
</feature>
<feature type="strand" evidence="15">
    <location>
        <begin position="189"/>
        <end position="194"/>
    </location>
</feature>
<feature type="strand" evidence="15">
    <location>
        <begin position="201"/>
        <end position="206"/>
    </location>
</feature>
<feature type="helix" evidence="15">
    <location>
        <begin position="207"/>
        <end position="209"/>
    </location>
</feature>
<feature type="strand" evidence="15">
    <location>
        <begin position="210"/>
        <end position="212"/>
    </location>
</feature>
<feature type="strand" evidence="15">
    <location>
        <begin position="215"/>
        <end position="217"/>
    </location>
</feature>
<feature type="turn" evidence="15">
    <location>
        <begin position="220"/>
        <end position="222"/>
    </location>
</feature>
<feature type="helix" evidence="15">
    <location>
        <begin position="224"/>
        <end position="226"/>
    </location>
</feature>
<feature type="strand" evidence="15">
    <location>
        <begin position="233"/>
        <end position="237"/>
    </location>
</feature>
<feature type="strand" evidence="15">
    <location>
        <begin position="241"/>
        <end position="251"/>
    </location>
</feature>
<feature type="strand" evidence="15">
    <location>
        <begin position="260"/>
        <end position="265"/>
    </location>
</feature>
<feature type="strand" evidence="15">
    <location>
        <begin position="277"/>
        <end position="279"/>
    </location>
</feature>
<feature type="helix" evidence="15">
    <location>
        <begin position="281"/>
        <end position="283"/>
    </location>
</feature>
<feature type="strand" evidence="15">
    <location>
        <begin position="284"/>
        <end position="286"/>
    </location>
</feature>
<gene>
    <name evidence="12" type="primary">SGF29</name>
    <name evidence="12" type="synonym">CCDC101</name>
</gene>
<accession>Q96ES7</accession>
<accession>Q96MF5</accession>
<organism>
    <name type="scientific">Homo sapiens</name>
    <name type="common">Human</name>
    <dbReference type="NCBI Taxonomy" id="9606"/>
    <lineage>
        <taxon>Eukaryota</taxon>
        <taxon>Metazoa</taxon>
        <taxon>Chordata</taxon>
        <taxon>Craniata</taxon>
        <taxon>Vertebrata</taxon>
        <taxon>Euteleostomi</taxon>
        <taxon>Mammalia</taxon>
        <taxon>Eutheria</taxon>
        <taxon>Euarchontoglires</taxon>
        <taxon>Primates</taxon>
        <taxon>Haplorrhini</taxon>
        <taxon>Catarrhini</taxon>
        <taxon>Hominidae</taxon>
        <taxon>Homo</taxon>
    </lineage>
</organism>
<comment type="function">
    <text evidence="2 5 6 7 8 9 10">Chromatin reader component of some histone acetyltransferase (HAT) SAGA-type complexes like the TFTC-HAT, ATAC or STAGA complexes (PubMed:19103755, PubMed:20850016, PubMed:21685874, PubMed:26421618, PubMed:26578293). SGF29 specifically recognizes and binds methylated 'Lys-4' of histone H3 (H3K4me), with a preference for trimethylated form (H3K4me3) (PubMed:20850016, PubMed:21685874, PubMed:26421618, PubMed:26578293). In the SAGA-type complexes, SGF29 is required to recruit complexes to H3K4me (PubMed:20850016). Involved in the response to endoplasmic reticulum (ER) stress by recruiting the SAGA complex to H3K4me, thereby promoting histone H3 acetylation and cell survival (PubMed:23894581). Also binds non-histone proteins that are methylated on Lys residues: specifically recognizes and binds CGAS monomethylated on 'Lys-506' (By similarity).</text>
</comment>
<comment type="subunit">
    <text evidence="1 2 5 6 7 10">Interacts with dimethylated and trimethylated 'Lys-4' of histone H3 (H3K4me2 and H3K4me3), with a preference for the trimethylated form (H3K4me3) (PubMed:21685874, PubMed:26578293). Component of some SAGA-type complexes (PubMed:20850016). Component of the ADA2A-containing complex (ATAC), composed of KAT14, KAT2A, TADA2L, TADA3L, ZZ3, MBIP, WDR5, YEATS2, CCDC101 and DR1 (PubMed:19103755). Interacts with (methylated) CGAS (By similarity). Interacts with TADA3L, GCN5L2, SUPT3H and MYC (By similarity).</text>
</comment>
<comment type="interaction">
    <interactant intactId="EBI-743117">
        <id>Q96ES7</id>
    </interactant>
    <interactant intactId="EBI-949378">
        <id>Q14457</id>
        <label>BECN1</label>
    </interactant>
    <organismsDiffer>false</organismsDiffer>
    <experiments>4</experiments>
</comment>
<comment type="interaction">
    <interactant intactId="EBI-743117">
        <id>Q96ES7</id>
    </interactant>
    <interactant intactId="EBI-18396958">
        <id>A1L168</id>
        <label>C20orf202</label>
    </interactant>
    <organismsDiffer>false</organismsDiffer>
    <experiments>3</experiments>
</comment>
<comment type="interaction">
    <interactant intactId="EBI-743117">
        <id>Q96ES7</id>
    </interactant>
    <interactant intactId="EBI-10171570">
        <id>Q68D86</id>
        <label>CCDC102B</label>
    </interactant>
    <organismsDiffer>false</organismsDiffer>
    <experiments>3</experiments>
</comment>
<comment type="interaction">
    <interactant intactId="EBI-743117">
        <id>Q96ES7</id>
    </interactant>
    <interactant intactId="EBI-10203156">
        <id>Q8NHS4</id>
        <label>CLHC1</label>
    </interactant>
    <organismsDiffer>false</organismsDiffer>
    <experiments>3</experiments>
</comment>
<comment type="interaction">
    <interactant intactId="EBI-743117">
        <id>Q96ES7</id>
    </interactant>
    <interactant intactId="EBI-12205861">
        <id>Q8NFT6-2</id>
        <label>DBF4B</label>
    </interactant>
    <organismsDiffer>false</organismsDiffer>
    <experiments>3</experiments>
</comment>
<comment type="interaction">
    <interactant intactId="EBI-743117">
        <id>Q96ES7</id>
    </interactant>
    <interactant intactId="EBI-79722">
        <id>P68431</id>
        <label>H3C12</label>
    </interactant>
    <organismsDiffer>false</organismsDiffer>
    <experiments>25</experiments>
</comment>
<comment type="interaction">
    <interactant intactId="EBI-743117">
        <id>Q96ES7</id>
    </interactant>
    <interactant intactId="EBI-722905">
        <id>P28290</id>
        <label>ITPRID2</label>
    </interactant>
    <organismsDiffer>false</organismsDiffer>
    <experiments>5</experiments>
</comment>
<comment type="interaction">
    <interactant intactId="EBI-743117">
        <id>Q96ES7</id>
    </interactant>
    <interactant intactId="EBI-1642317">
        <id>Q99661</id>
        <label>KIF2C</label>
    </interactant>
    <organismsDiffer>false</organismsDiffer>
    <experiments>4</experiments>
</comment>
<comment type="interaction">
    <interactant intactId="EBI-743117">
        <id>Q96ES7</id>
    </interactant>
    <interactant intactId="EBI-373334">
        <id>Q9Y448</id>
        <label>KNSTRN</label>
    </interactant>
    <organismsDiffer>false</organismsDiffer>
    <experiments>8</experiments>
</comment>
<comment type="interaction">
    <interactant intactId="EBI-743117">
        <id>Q96ES7</id>
    </interactant>
    <interactant intactId="EBI-10171552">
        <id>A1A4E9</id>
        <label>KRT13</label>
    </interactant>
    <organismsDiffer>false</organismsDiffer>
    <experiments>3</experiments>
</comment>
<comment type="interaction">
    <interactant intactId="EBI-743117">
        <id>Q96ES7</id>
    </interactant>
    <interactant intactId="EBI-739566">
        <id>P19012</id>
        <label>KRT15</label>
    </interactant>
    <organismsDiffer>false</organismsDiffer>
    <experiments>7</experiments>
</comment>
<comment type="interaction">
    <interactant intactId="EBI-743117">
        <id>Q96ES7</id>
    </interactant>
    <interactant intactId="EBI-356410">
        <id>P08779</id>
        <label>KRT16</label>
    </interactant>
    <organismsDiffer>false</organismsDiffer>
    <experiments>4</experiments>
</comment>
<comment type="interaction">
    <interactant intactId="EBI-743117">
        <id>Q96ES7</id>
    </interactant>
    <interactant intactId="EBI-742756">
        <id>P08727</id>
        <label>KRT19</label>
    </interactant>
    <organismsDiffer>false</organismsDiffer>
    <experiments>5</experiments>
</comment>
<comment type="interaction">
    <interactant intactId="EBI-743117">
        <id>Q96ES7</id>
    </interactant>
    <interactant intactId="EBI-2952736">
        <id>Q2M2I5</id>
        <label>KRT24</label>
    </interactant>
    <organismsDiffer>false</organismsDiffer>
    <experiments>3</experiments>
</comment>
<comment type="interaction">
    <interactant intactId="EBI-743117">
        <id>Q96ES7</id>
    </interactant>
    <interactant intactId="EBI-3044087">
        <id>Q7Z3Y8</id>
        <label>KRT27</label>
    </interactant>
    <organismsDiffer>false</organismsDiffer>
    <experiments>4</experiments>
</comment>
<comment type="interaction">
    <interactant intactId="EBI-743117">
        <id>Q96ES7</id>
    </interactant>
    <interactant intactId="EBI-1049638">
        <id>Q14525</id>
        <label>KRT33B</label>
    </interactant>
    <organismsDiffer>false</organismsDiffer>
    <experiments>3</experiments>
</comment>
<comment type="interaction">
    <interactant intactId="EBI-743117">
        <id>Q96ES7</id>
    </interactant>
    <interactant intactId="EBI-739832">
        <id>Q8TBB1</id>
        <label>LNX1</label>
    </interactant>
    <organismsDiffer>false</organismsDiffer>
    <experiments>3</experiments>
</comment>
<comment type="interaction">
    <interactant intactId="EBI-743117">
        <id>Q96ES7</id>
    </interactant>
    <interactant intactId="EBI-1216080">
        <id>Q9Y250</id>
        <label>LZTS1</label>
    </interactant>
    <organismsDiffer>false</organismsDiffer>
    <experiments>3</experiments>
</comment>
<comment type="interaction">
    <interactant intactId="EBI-743117">
        <id>Q96ES7</id>
    </interactant>
    <interactant intactId="EBI-394704">
        <id>Q9P086</id>
        <label>MED11</label>
    </interactant>
    <organismsDiffer>false</organismsDiffer>
    <experiments>3</experiments>
</comment>
<comment type="interaction">
    <interactant intactId="EBI-743117">
        <id>Q96ES7</id>
    </interactant>
    <interactant intactId="EBI-394607">
        <id>Q9NPJ6</id>
        <label>MED4</label>
    </interactant>
    <organismsDiffer>false</organismsDiffer>
    <experiments>3</experiments>
</comment>
<comment type="interaction">
    <interactant intactId="EBI-743117">
        <id>Q96ES7</id>
    </interactant>
    <interactant intactId="EBI-17491620">
        <id>P13349</id>
        <label>MYF5</label>
    </interactant>
    <organismsDiffer>false</organismsDiffer>
    <experiments>5</experiments>
</comment>
<comment type="interaction">
    <interactant intactId="EBI-743117">
        <id>Q96ES7</id>
    </interactant>
    <interactant intactId="EBI-715849">
        <id>O14777</id>
        <label>NDC80</label>
    </interactant>
    <organismsDiffer>false</organismsDiffer>
    <experiments>8</experiments>
</comment>
<comment type="interaction">
    <interactant intactId="EBI-743117">
        <id>Q96ES7</id>
    </interactant>
    <interactant intactId="EBI-11336487">
        <id>Q2NL68</id>
        <label>PROSER3</label>
    </interactant>
    <organismsDiffer>false</organismsDiffer>
    <experiments>3</experiments>
</comment>
<comment type="interaction">
    <interactant intactId="EBI-743117">
        <id>Q96ES7</id>
    </interactant>
    <interactant intactId="EBI-726876">
        <id>Q6NUQ1</id>
        <label>RINT1</label>
    </interactant>
    <organismsDiffer>false</organismsDiffer>
    <experiments>7</experiments>
</comment>
<comment type="interaction">
    <interactant intactId="EBI-743117">
        <id>Q96ES7</id>
    </interactant>
    <interactant intactId="EBI-10283466">
        <id>A1L190</id>
        <label>SYCE3</label>
    </interactant>
    <organismsDiffer>false</organismsDiffer>
    <experiments>3</experiments>
</comment>
<comment type="interaction">
    <interactant intactId="EBI-743117">
        <id>Q96ES7</id>
    </interactant>
    <interactant intactId="EBI-352936">
        <id>Q8N3V7</id>
        <label>SYNPO</label>
    </interactant>
    <organismsDiffer>false</organismsDiffer>
    <experiments>5</experiments>
</comment>
<comment type="interaction">
    <interactant intactId="EBI-743117">
        <id>Q96ES7</id>
    </interactant>
    <interactant intactId="EBI-473249">
        <id>O75528</id>
        <label>TADA3</label>
    </interactant>
    <organismsDiffer>false</organismsDiffer>
    <experiments>15</experiments>
</comment>
<comment type="interaction">
    <interactant intactId="EBI-743117">
        <id>Q96ES7</id>
    </interactant>
    <interactant intactId="EBI-533224">
        <id>P15884</id>
        <label>TCF4</label>
    </interactant>
    <organismsDiffer>false</organismsDiffer>
    <experiments>7</experiments>
</comment>
<comment type="interaction">
    <interactant intactId="EBI-743117">
        <id>Q96ES7</id>
    </interactant>
    <interactant intactId="EBI-13636688">
        <id>P15884-3</id>
        <label>TCF4</label>
    </interactant>
    <organismsDiffer>false</organismsDiffer>
    <experiments>3</experiments>
</comment>
<comment type="interaction">
    <interactant intactId="EBI-743117">
        <id>Q96ES7</id>
    </interactant>
    <interactant intactId="EBI-12090309">
        <id>Q9BXU0</id>
        <label>TEX12</label>
    </interactant>
    <organismsDiffer>false</organismsDiffer>
    <experiments>3</experiments>
</comment>
<comment type="interaction">
    <interactant intactId="EBI-743117">
        <id>Q96ES7</id>
    </interactant>
    <interactant intactId="EBI-1105213">
        <id>Q9UBB9</id>
        <label>TFIP11</label>
    </interactant>
    <organismsDiffer>false</organismsDiffer>
    <experiments>3</experiments>
</comment>
<comment type="interaction">
    <interactant intactId="EBI-743117">
        <id>Q96ES7</id>
    </interactant>
    <interactant intactId="EBI-11946508">
        <id>Q8TDR0-2</id>
        <label>TRAF3IP1</label>
    </interactant>
    <organismsDiffer>false</organismsDiffer>
    <experiments>3</experiments>
</comment>
<comment type="subcellular location">
    <subcellularLocation>
        <location evidence="1">Nucleus</location>
    </subcellularLocation>
</comment>
<comment type="domain">
    <text evidence="4 7 9 10">The SGF29 C-terminal (also named tudor-like) domain mediates binding to methylated 'Lys-4' of histone H3 (H3K4me), with a preference for trimethylated form (H3K4me3).</text>
</comment>
<comment type="similarity">
    <text evidence="4">Belongs to the SGF29 family.</text>
</comment>
<keyword id="KW-0002">3D-structure</keyword>
<keyword id="KW-0007">Acetylation</keyword>
<keyword id="KW-0156">Chromatin regulator</keyword>
<keyword id="KW-0175">Coiled coil</keyword>
<keyword id="KW-0539">Nucleus</keyword>
<keyword id="KW-1267">Proteomics identification</keyword>
<keyword id="KW-1185">Reference proteome</keyword>
<keyword id="KW-0804">Transcription</keyword>
<keyword id="KW-0805">Transcription regulation</keyword>
<protein>
    <recommendedName>
        <fullName evidence="11">SAGA-associated factor 29</fullName>
    </recommendedName>
    <alternativeName>
        <fullName>Coiled-coil domain-containing protein 101</fullName>
    </alternativeName>
    <alternativeName>
        <fullName evidence="12">SAGA complex-associated factor 29</fullName>
    </alternativeName>
</protein>
<dbReference type="EMBL" id="AK057008">
    <property type="protein sequence ID" value="BAB71340.1"/>
    <property type="molecule type" value="mRNA"/>
</dbReference>
<dbReference type="EMBL" id="BC011981">
    <property type="protein sequence ID" value="AAH11981.1"/>
    <property type="molecule type" value="mRNA"/>
</dbReference>
<dbReference type="CCDS" id="CCDS10635.1"/>
<dbReference type="RefSeq" id="NP_612423.1">
    <property type="nucleotide sequence ID" value="NM_138414.3"/>
</dbReference>
<dbReference type="RefSeq" id="XP_054235452.1">
    <property type="nucleotide sequence ID" value="XM_054379477.1"/>
</dbReference>
<dbReference type="PDB" id="3LX7">
    <property type="method" value="X-ray"/>
    <property type="resolution" value="1.78 A"/>
    <property type="chains" value="A=138-293"/>
</dbReference>
<dbReference type="PDB" id="3ME9">
    <property type="method" value="X-ray"/>
    <property type="resolution" value="1.37 A"/>
    <property type="chains" value="A/B=115-293"/>
</dbReference>
<dbReference type="PDB" id="3MEA">
    <property type="method" value="X-ray"/>
    <property type="resolution" value="1.26 A"/>
    <property type="chains" value="A=129-291"/>
</dbReference>
<dbReference type="PDB" id="3MET">
    <property type="method" value="X-ray"/>
    <property type="resolution" value="2.00 A"/>
    <property type="chains" value="A/B=115-293"/>
</dbReference>
<dbReference type="PDB" id="3MEU">
    <property type="method" value="X-ray"/>
    <property type="resolution" value="1.28 A"/>
    <property type="chains" value="A/B=115-293"/>
</dbReference>
<dbReference type="PDB" id="3MEV">
    <property type="method" value="X-ray"/>
    <property type="resolution" value="1.83 A"/>
    <property type="chains" value="A/B=115-293"/>
</dbReference>
<dbReference type="PDB" id="3MEW">
    <property type="method" value="X-ray"/>
    <property type="resolution" value="1.92 A"/>
    <property type="chains" value="A=129-287"/>
</dbReference>
<dbReference type="PDB" id="5C0M">
    <property type="method" value="X-ray"/>
    <property type="resolution" value="1.60 A"/>
    <property type="chains" value="A/B=115-293"/>
</dbReference>
<dbReference type="PDBsum" id="3LX7"/>
<dbReference type="PDBsum" id="3ME9"/>
<dbReference type="PDBsum" id="3MEA"/>
<dbReference type="PDBsum" id="3MET"/>
<dbReference type="PDBsum" id="3MEU"/>
<dbReference type="PDBsum" id="3MEV"/>
<dbReference type="PDBsum" id="3MEW"/>
<dbReference type="PDBsum" id="5C0M"/>
<dbReference type="SMR" id="Q96ES7"/>
<dbReference type="BioGRID" id="125213">
    <property type="interactions" value="175"/>
</dbReference>
<dbReference type="ComplexPortal" id="CPX-1004">
    <property type="entry name" value="PCAF-containing ATAC complex"/>
</dbReference>
<dbReference type="ComplexPortal" id="CPX-6802">
    <property type="entry name" value="SAGA complex, KAT2B variant"/>
</dbReference>
<dbReference type="ComplexPortal" id="CPX-900">
    <property type="entry name" value="SAGA complex, KAT2A variant"/>
</dbReference>
<dbReference type="ComplexPortal" id="CPX-997">
    <property type="entry name" value="GCN5-containing ATAC complex"/>
</dbReference>
<dbReference type="CORUM" id="Q96ES7"/>
<dbReference type="FunCoup" id="Q96ES7">
    <property type="interactions" value="742"/>
</dbReference>
<dbReference type="IntAct" id="Q96ES7">
    <property type="interactions" value="147"/>
</dbReference>
<dbReference type="MINT" id="Q96ES7"/>
<dbReference type="STRING" id="9606.ENSP00000316114"/>
<dbReference type="ChEMBL" id="CHEMBL4523425"/>
<dbReference type="GlyGen" id="Q96ES7">
    <property type="glycosylation" value="1 site, 1 O-linked glycan (1 site)"/>
</dbReference>
<dbReference type="iPTMnet" id="Q96ES7"/>
<dbReference type="PhosphoSitePlus" id="Q96ES7"/>
<dbReference type="BioMuta" id="SGF29"/>
<dbReference type="DMDM" id="74731608"/>
<dbReference type="jPOST" id="Q96ES7"/>
<dbReference type="MassIVE" id="Q96ES7"/>
<dbReference type="PaxDb" id="9606-ENSP00000316114"/>
<dbReference type="PeptideAtlas" id="Q96ES7"/>
<dbReference type="ProteomicsDB" id="76446"/>
<dbReference type="Pumba" id="Q96ES7"/>
<dbReference type="Antibodypedia" id="56026">
    <property type="antibodies" value="112 antibodies from 20 providers"/>
</dbReference>
<dbReference type="DNASU" id="112869"/>
<dbReference type="Ensembl" id="ENST00000317058.8">
    <property type="protein sequence ID" value="ENSP00000316114.3"/>
    <property type="gene ID" value="ENSG00000176476.9"/>
</dbReference>
<dbReference type="GeneID" id="112869"/>
<dbReference type="KEGG" id="hsa:112869"/>
<dbReference type="MANE-Select" id="ENST00000317058.8">
    <property type="protein sequence ID" value="ENSP00000316114.3"/>
    <property type="RefSeq nucleotide sequence ID" value="NM_138414.3"/>
    <property type="RefSeq protein sequence ID" value="NP_612423.1"/>
</dbReference>
<dbReference type="UCSC" id="uc002dqf.4">
    <property type="organism name" value="human"/>
</dbReference>
<dbReference type="AGR" id="HGNC:25156"/>
<dbReference type="CTD" id="112869"/>
<dbReference type="DisGeNET" id="112869"/>
<dbReference type="GeneCards" id="SGF29"/>
<dbReference type="HGNC" id="HGNC:25156">
    <property type="gene designation" value="SGF29"/>
</dbReference>
<dbReference type="HPA" id="ENSG00000176476">
    <property type="expression patterns" value="Low tissue specificity"/>
</dbReference>
<dbReference type="MIM" id="613374">
    <property type="type" value="gene"/>
</dbReference>
<dbReference type="neXtProt" id="NX_Q96ES7"/>
<dbReference type="OpenTargets" id="ENSG00000176476"/>
<dbReference type="PharmGKB" id="PA144596468"/>
<dbReference type="VEuPathDB" id="HostDB:ENSG00000176476"/>
<dbReference type="eggNOG" id="KOG3038">
    <property type="taxonomic scope" value="Eukaryota"/>
</dbReference>
<dbReference type="GeneTree" id="ENSGT00390000015229"/>
<dbReference type="HOGENOM" id="CLU_056816_0_0_1"/>
<dbReference type="InParanoid" id="Q96ES7"/>
<dbReference type="OMA" id="EPTYIAK"/>
<dbReference type="OrthoDB" id="10265994at2759"/>
<dbReference type="PAN-GO" id="Q96ES7">
    <property type="GO annotations" value="3 GO annotations based on evolutionary models"/>
</dbReference>
<dbReference type="PhylomeDB" id="Q96ES7"/>
<dbReference type="TreeFam" id="TF314958"/>
<dbReference type="PathwayCommons" id="Q96ES7"/>
<dbReference type="Reactome" id="R-HSA-3214847">
    <property type="pathway name" value="HATs acetylate histones"/>
</dbReference>
<dbReference type="Reactome" id="R-HSA-9772755">
    <property type="pathway name" value="Formation of WDR5-containing histone-modifying complexes"/>
</dbReference>
<dbReference type="SignaLink" id="Q96ES7"/>
<dbReference type="SIGNOR" id="Q96ES7"/>
<dbReference type="BioGRID-ORCS" id="112869">
    <property type="hits" value="425 hits in 1166 CRISPR screens"/>
</dbReference>
<dbReference type="ChiTaRS" id="SGF29">
    <property type="organism name" value="human"/>
</dbReference>
<dbReference type="EvolutionaryTrace" id="Q96ES7"/>
<dbReference type="GenomeRNAi" id="112869"/>
<dbReference type="Pharos" id="Q96ES7">
    <property type="development level" value="Tbio"/>
</dbReference>
<dbReference type="PRO" id="PR:Q96ES7"/>
<dbReference type="Proteomes" id="UP000005640">
    <property type="component" value="Chromosome 16"/>
</dbReference>
<dbReference type="RNAct" id="Q96ES7">
    <property type="molecule type" value="protein"/>
</dbReference>
<dbReference type="Bgee" id="ENSG00000176476">
    <property type="expression patterns" value="Expressed in hindlimb stylopod muscle and 187 other cell types or tissues"/>
</dbReference>
<dbReference type="ExpressionAtlas" id="Q96ES7">
    <property type="expression patterns" value="baseline and differential"/>
</dbReference>
<dbReference type="GO" id="GO:0140672">
    <property type="term" value="C:ATAC complex"/>
    <property type="evidence" value="ECO:0000314"/>
    <property type="project" value="BHF-UCL"/>
</dbReference>
<dbReference type="GO" id="GO:0072686">
    <property type="term" value="C:mitotic spindle"/>
    <property type="evidence" value="ECO:0000303"/>
    <property type="project" value="ComplexPortal"/>
</dbReference>
<dbReference type="GO" id="GO:0005654">
    <property type="term" value="C:nucleoplasm"/>
    <property type="evidence" value="ECO:0000304"/>
    <property type="project" value="Reactome"/>
</dbReference>
<dbReference type="GO" id="GO:0000124">
    <property type="term" value="C:SAGA complex"/>
    <property type="evidence" value="ECO:0000318"/>
    <property type="project" value="GO_Central"/>
</dbReference>
<dbReference type="GO" id="GO:0070461">
    <property type="term" value="C:SAGA-type complex"/>
    <property type="evidence" value="ECO:0000314"/>
    <property type="project" value="UniProtKB"/>
</dbReference>
<dbReference type="GO" id="GO:0140003">
    <property type="term" value="F:histone H3K36me3 reader activity"/>
    <property type="evidence" value="ECO:0000314"/>
    <property type="project" value="UniProtKB"/>
</dbReference>
<dbReference type="GO" id="GO:0140002">
    <property type="term" value="F:histone H3K4me3 reader activity"/>
    <property type="evidence" value="ECO:0000314"/>
    <property type="project" value="UniProtKB"/>
</dbReference>
<dbReference type="GO" id="GO:0035064">
    <property type="term" value="F:methylated histone binding"/>
    <property type="evidence" value="ECO:0000318"/>
    <property type="project" value="GO_Central"/>
</dbReference>
<dbReference type="GO" id="GO:0071169">
    <property type="term" value="P:establishment of protein localization to chromatin"/>
    <property type="evidence" value="ECO:0000304"/>
    <property type="project" value="UniProtKB"/>
</dbReference>
<dbReference type="GO" id="GO:0000122">
    <property type="term" value="P:negative regulation of transcription by RNA polymerase II"/>
    <property type="evidence" value="ECO:0000314"/>
    <property type="project" value="BHF-UCL"/>
</dbReference>
<dbReference type="GO" id="GO:0045893">
    <property type="term" value="P:positive regulation of DNA-templated transcription"/>
    <property type="evidence" value="ECO:0000303"/>
    <property type="project" value="ComplexPortal"/>
</dbReference>
<dbReference type="GO" id="GO:0051726">
    <property type="term" value="P:regulation of cell cycle"/>
    <property type="evidence" value="ECO:0000315"/>
    <property type="project" value="ComplexPortal"/>
</dbReference>
<dbReference type="GO" id="GO:0051302">
    <property type="term" value="P:regulation of cell division"/>
    <property type="evidence" value="ECO:0000314"/>
    <property type="project" value="ComplexPortal"/>
</dbReference>
<dbReference type="GO" id="GO:0006282">
    <property type="term" value="P:regulation of DNA repair"/>
    <property type="evidence" value="ECO:0000303"/>
    <property type="project" value="ComplexPortal"/>
</dbReference>
<dbReference type="GO" id="GO:0006355">
    <property type="term" value="P:regulation of DNA-templated transcription"/>
    <property type="evidence" value="ECO:0000315"/>
    <property type="project" value="ComplexPortal"/>
</dbReference>
<dbReference type="GO" id="GO:0045995">
    <property type="term" value="P:regulation of embryonic development"/>
    <property type="evidence" value="ECO:0000266"/>
    <property type="project" value="ComplexPortal"/>
</dbReference>
<dbReference type="GO" id="GO:0043484">
    <property type="term" value="P:regulation of RNA splicing"/>
    <property type="evidence" value="ECO:0000303"/>
    <property type="project" value="ComplexPortal"/>
</dbReference>
<dbReference type="GO" id="GO:0006357">
    <property type="term" value="P:regulation of transcription by RNA polymerase II"/>
    <property type="evidence" value="ECO:0000314"/>
    <property type="project" value="ComplexPortal"/>
</dbReference>
<dbReference type="GO" id="GO:0034976">
    <property type="term" value="P:response to endoplasmic reticulum stress"/>
    <property type="evidence" value="ECO:0000315"/>
    <property type="project" value="UniProtKB"/>
</dbReference>
<dbReference type="GO" id="GO:0045815">
    <property type="term" value="P:transcription initiation-coupled chromatin remodeling"/>
    <property type="evidence" value="ECO:0000315"/>
    <property type="project" value="UniProtKB"/>
</dbReference>
<dbReference type="CDD" id="cd20393">
    <property type="entry name" value="Tudor_SGF29_rpt1"/>
    <property type="match status" value="1"/>
</dbReference>
<dbReference type="CDD" id="cd20394">
    <property type="entry name" value="Tudor_SGF29_rpt2"/>
    <property type="match status" value="1"/>
</dbReference>
<dbReference type="FunFam" id="2.30.30.140:FF:000026">
    <property type="entry name" value="SAGA-associated factor 29 homolog"/>
    <property type="match status" value="1"/>
</dbReference>
<dbReference type="FunFam" id="2.30.30.140:FF:000029">
    <property type="entry name" value="SAGA-associated factor 29 homolog"/>
    <property type="match status" value="1"/>
</dbReference>
<dbReference type="Gene3D" id="2.30.30.140">
    <property type="match status" value="2"/>
</dbReference>
<dbReference type="InterPro" id="IPR037802">
    <property type="entry name" value="SGF29"/>
</dbReference>
<dbReference type="InterPro" id="IPR010750">
    <property type="entry name" value="SGF29_tudor-like_dom"/>
</dbReference>
<dbReference type="InterPro" id="IPR047288">
    <property type="entry name" value="Tudor_SGF29_rpt1"/>
</dbReference>
<dbReference type="InterPro" id="IPR047287">
    <property type="entry name" value="Tudor_SGF29_rpt2"/>
</dbReference>
<dbReference type="PANTHER" id="PTHR21539">
    <property type="entry name" value="SAGA-ASSOCIATED FACTOR 29"/>
    <property type="match status" value="1"/>
</dbReference>
<dbReference type="PANTHER" id="PTHR21539:SF0">
    <property type="entry name" value="SAGA-ASSOCIATED FACTOR 29"/>
    <property type="match status" value="1"/>
</dbReference>
<dbReference type="Pfam" id="PF07039">
    <property type="entry name" value="SGF29_Tudor"/>
    <property type="match status" value="1"/>
</dbReference>
<dbReference type="PROSITE" id="PS51518">
    <property type="entry name" value="SGF29_C"/>
    <property type="match status" value="1"/>
</dbReference>
<name>SGF29_HUMAN</name>
<sequence length="293" mass="33238">MALVSADSRIAELLTELHQLIKQTQEERSRSEHNLVNIQKTHERMQTENKISPYYRTKLRGLYTTAKADAEAECNILRKALDKIAEIKSLLEERRIAAKIAGLYNDSEPPRKTMRRGVLMTLLQQSAMTLPLWIGKPGDKPPPLCGAIPASGDYVARPGDKVAARVKAVDGDEQWILAEVVSYSHATNKYEVDDIDEEGKERHTLSRRRVIPLPQWKANPETDPEALFQKEQLVLALYPQTTCFYRALIHAPPQRPQDDYSVLFEDTSYADGYSPPLNVAQRYVVACKEPKKK</sequence>